<organism>
    <name type="scientific">Escherichia coli (strain SE11)</name>
    <dbReference type="NCBI Taxonomy" id="409438"/>
    <lineage>
        <taxon>Bacteria</taxon>
        <taxon>Pseudomonadati</taxon>
        <taxon>Pseudomonadota</taxon>
        <taxon>Gammaproteobacteria</taxon>
        <taxon>Enterobacterales</taxon>
        <taxon>Enterobacteriaceae</taxon>
        <taxon>Escherichia</taxon>
    </lineage>
</organism>
<gene>
    <name evidence="1" type="primary">mdtH</name>
    <name type="ordered locus">ECSE_1128</name>
</gene>
<evidence type="ECO:0000255" key="1">
    <source>
        <dbReference type="HAMAP-Rule" id="MF_01529"/>
    </source>
</evidence>
<comment type="function">
    <text evidence="1">Confers resistance to norfloxacin and enoxacin.</text>
</comment>
<comment type="subcellular location">
    <subcellularLocation>
        <location evidence="1">Cell inner membrane</location>
        <topology evidence="1">Multi-pass membrane protein</topology>
    </subcellularLocation>
</comment>
<comment type="similarity">
    <text evidence="1">Belongs to the major facilitator superfamily. DHA1 family. MdtH (TC 2.A.1.2.21) subfamily.</text>
</comment>
<dbReference type="EMBL" id="AP009240">
    <property type="protein sequence ID" value="BAG76652.1"/>
    <property type="molecule type" value="Genomic_DNA"/>
</dbReference>
<dbReference type="RefSeq" id="WP_000092202.1">
    <property type="nucleotide sequence ID" value="NC_011415.1"/>
</dbReference>
<dbReference type="SMR" id="B6I9E2"/>
<dbReference type="KEGG" id="ecy:ECSE_1128"/>
<dbReference type="HOGENOM" id="CLU_001265_60_2_6"/>
<dbReference type="Proteomes" id="UP000008199">
    <property type="component" value="Chromosome"/>
</dbReference>
<dbReference type="GO" id="GO:0005886">
    <property type="term" value="C:plasma membrane"/>
    <property type="evidence" value="ECO:0007669"/>
    <property type="project" value="UniProtKB-SubCell"/>
</dbReference>
<dbReference type="GO" id="GO:0022857">
    <property type="term" value="F:transmembrane transporter activity"/>
    <property type="evidence" value="ECO:0007669"/>
    <property type="project" value="UniProtKB-UniRule"/>
</dbReference>
<dbReference type="GO" id="GO:0046677">
    <property type="term" value="P:response to antibiotic"/>
    <property type="evidence" value="ECO:0007669"/>
    <property type="project" value="UniProtKB-KW"/>
</dbReference>
<dbReference type="CDD" id="cd17329">
    <property type="entry name" value="MFS_MdtH_MDR_like"/>
    <property type="match status" value="1"/>
</dbReference>
<dbReference type="FunFam" id="1.20.1250.20:FF:000039">
    <property type="entry name" value="Multidrug resistance protein MdtH"/>
    <property type="match status" value="1"/>
</dbReference>
<dbReference type="Gene3D" id="1.20.1250.20">
    <property type="entry name" value="MFS general substrate transporter like domains"/>
    <property type="match status" value="1"/>
</dbReference>
<dbReference type="HAMAP" id="MF_01529">
    <property type="entry name" value="MFS_MdtH"/>
    <property type="match status" value="1"/>
</dbReference>
<dbReference type="InterPro" id="IPR011701">
    <property type="entry name" value="MFS"/>
</dbReference>
<dbReference type="InterPro" id="IPR020846">
    <property type="entry name" value="MFS_dom"/>
</dbReference>
<dbReference type="InterPro" id="IPR036259">
    <property type="entry name" value="MFS_trans_sf"/>
</dbReference>
<dbReference type="InterPro" id="IPR050171">
    <property type="entry name" value="MFS_Transporters"/>
</dbReference>
<dbReference type="InterPro" id="IPR022855">
    <property type="entry name" value="Multidrug-R_MdtH"/>
</dbReference>
<dbReference type="NCBIfam" id="NF008650">
    <property type="entry name" value="PRK11646.1"/>
    <property type="match status" value="1"/>
</dbReference>
<dbReference type="PANTHER" id="PTHR23517:SF2">
    <property type="entry name" value="MULTIDRUG RESISTANCE PROTEIN MDTH"/>
    <property type="match status" value="1"/>
</dbReference>
<dbReference type="PANTHER" id="PTHR23517">
    <property type="entry name" value="RESISTANCE PROTEIN MDTM, PUTATIVE-RELATED-RELATED"/>
    <property type="match status" value="1"/>
</dbReference>
<dbReference type="Pfam" id="PF07690">
    <property type="entry name" value="MFS_1"/>
    <property type="match status" value="1"/>
</dbReference>
<dbReference type="SUPFAM" id="SSF103473">
    <property type="entry name" value="MFS general substrate transporter"/>
    <property type="match status" value="1"/>
</dbReference>
<dbReference type="PROSITE" id="PS50850">
    <property type="entry name" value="MFS"/>
    <property type="match status" value="1"/>
</dbReference>
<feature type="chain" id="PRO_1000200795" description="Multidrug resistance protein MdtH">
    <location>
        <begin position="1"/>
        <end position="402"/>
    </location>
</feature>
<feature type="topological domain" description="Cytoplasmic" evidence="1">
    <location>
        <begin position="1"/>
        <end position="12"/>
    </location>
</feature>
<feature type="transmembrane region" description="Helical" evidence="1">
    <location>
        <begin position="13"/>
        <end position="33"/>
    </location>
</feature>
<feature type="topological domain" description="Periplasmic" evidence="1">
    <location>
        <begin position="34"/>
        <end position="98"/>
    </location>
</feature>
<feature type="transmembrane region" description="Helical" evidence="1">
    <location>
        <begin position="99"/>
        <end position="116"/>
    </location>
</feature>
<feature type="topological domain" description="Cytoplasmic" evidence="1">
    <location>
        <begin position="117"/>
        <end position="138"/>
    </location>
</feature>
<feature type="transmembrane region" description="Helical" evidence="1">
    <location>
        <begin position="139"/>
        <end position="159"/>
    </location>
</feature>
<feature type="topological domain" description="Periplasmic" evidence="1">
    <location>
        <begin position="160"/>
        <end position="164"/>
    </location>
</feature>
<feature type="transmembrane region" description="Helical" evidence="1">
    <location>
        <begin position="165"/>
        <end position="185"/>
    </location>
</feature>
<feature type="topological domain" description="Cytoplasmic" evidence="1">
    <location>
        <begin position="186"/>
        <end position="213"/>
    </location>
</feature>
<feature type="transmembrane region" description="Helical" evidence="1">
    <location>
        <begin position="214"/>
        <end position="234"/>
    </location>
</feature>
<feature type="topological domain" description="Periplasmic" evidence="1">
    <location>
        <begin position="235"/>
        <end position="243"/>
    </location>
</feature>
<feature type="transmembrane region" description="Helical" evidence="1">
    <location>
        <begin position="244"/>
        <end position="264"/>
    </location>
</feature>
<feature type="topological domain" description="Cytoplasmic" evidence="1">
    <location>
        <begin position="265"/>
        <end position="276"/>
    </location>
</feature>
<feature type="transmembrane region" description="Helical" evidence="1">
    <location>
        <begin position="277"/>
        <end position="297"/>
    </location>
</feature>
<feature type="topological domain" description="Periplasmic" evidence="1">
    <location>
        <begin position="298"/>
        <end position="299"/>
    </location>
</feature>
<feature type="transmembrane region" description="Helical" evidence="1">
    <location>
        <begin position="300"/>
        <end position="320"/>
    </location>
</feature>
<feature type="topological domain" description="Cytoplasmic" evidence="1">
    <location>
        <begin position="321"/>
        <end position="339"/>
    </location>
</feature>
<feature type="transmembrane region" description="Helical" evidence="1">
    <location>
        <begin position="340"/>
        <end position="360"/>
    </location>
</feature>
<feature type="topological domain" description="Periplasmic" evidence="1">
    <location>
        <begin position="361"/>
        <end position="367"/>
    </location>
</feature>
<feature type="transmembrane region" description="Helical" evidence="1">
    <location>
        <begin position="368"/>
        <end position="388"/>
    </location>
</feature>
<feature type="topological domain" description="Cytoplasmic" evidence="1">
    <location>
        <begin position="389"/>
        <end position="402"/>
    </location>
</feature>
<keyword id="KW-0046">Antibiotic resistance</keyword>
<keyword id="KW-0997">Cell inner membrane</keyword>
<keyword id="KW-1003">Cell membrane</keyword>
<keyword id="KW-0472">Membrane</keyword>
<keyword id="KW-0812">Transmembrane</keyword>
<keyword id="KW-1133">Transmembrane helix</keyword>
<keyword id="KW-0813">Transport</keyword>
<proteinExistence type="inferred from homology"/>
<accession>B6I9E2</accession>
<reference key="1">
    <citation type="journal article" date="2008" name="DNA Res.">
        <title>Complete genome sequence and comparative analysis of the wild-type commensal Escherichia coli strain SE11 isolated from a healthy adult.</title>
        <authorList>
            <person name="Oshima K."/>
            <person name="Toh H."/>
            <person name="Ogura Y."/>
            <person name="Sasamoto H."/>
            <person name="Morita H."/>
            <person name="Park S.-H."/>
            <person name="Ooka T."/>
            <person name="Iyoda S."/>
            <person name="Taylor T.D."/>
            <person name="Hayashi T."/>
            <person name="Itoh K."/>
            <person name="Hattori M."/>
        </authorList>
    </citation>
    <scope>NUCLEOTIDE SEQUENCE [LARGE SCALE GENOMIC DNA]</scope>
    <source>
        <strain>SE11</strain>
    </source>
</reference>
<protein>
    <recommendedName>
        <fullName evidence="1">Multidrug resistance protein MdtH</fullName>
    </recommendedName>
</protein>
<sequence length="402" mass="44319">MSRVSQARNLGKYFLLIDNMLVVLGFFVVFPLISIRFVDQMGWAAVMVGIALGLRQFIQQGLGIFGGAIADRFGAKPMIVTGMLMRAAGFATMGIAHEPWLLWFSCLLSGLGGTLFDPPRSALVVKLIRPQQRGRFFSLLMMQDSAGAVIGALLGSWLLQYDFRLVCATGAVLFVLCAAFNAWLLPAWKLSTVRTPVREGMTRVMRDKRFVTYVLTLAGYYMLAVQVMLMLPIMVNDVAGAPSAVKWMYAIEACLSLTLLYPIARWSEKHFRLEHRLMAGLLIMSLSMMPVGMVSGLQQLFTLICLFYIGSIIAEPARETLSASLADARARGSYMGCSRLGLAIGGAIGYIGGGWLFDLGKSAHQPELPWMMLGIIGIFTFLALGWQFSQKRAARRLLERDA</sequence>
<name>MDTH_ECOSE</name>